<comment type="function">
    <text evidence="1">Histone chaperone that facilitates histone deposition and histone exchange and removal during nucleosome assembly and disassembly.</text>
</comment>
<comment type="subunit">
    <text evidence="1">Interacts with histone H3 and histone H4.</text>
</comment>
<comment type="subcellular location">
    <subcellularLocation>
        <location evidence="1">Nucleus</location>
    </subcellularLocation>
</comment>
<comment type="similarity">
    <text evidence="4">Belongs to the ASF1 family.</text>
</comment>
<evidence type="ECO:0000250" key="1"/>
<evidence type="ECO:0000255" key="2"/>
<evidence type="ECO:0000256" key="3">
    <source>
        <dbReference type="SAM" id="MobiDB-lite"/>
    </source>
</evidence>
<evidence type="ECO:0000305" key="4"/>
<keyword id="KW-0143">Chaperone</keyword>
<keyword id="KW-0156">Chromatin regulator</keyword>
<keyword id="KW-0175">Coiled coil</keyword>
<keyword id="KW-0539">Nucleus</keyword>
<keyword id="KW-1185">Reference proteome</keyword>
<keyword id="KW-0804">Transcription</keyword>
<keyword id="KW-0805">Transcription regulation</keyword>
<protein>
    <recommendedName>
        <fullName>Histone chaperone ASF1</fullName>
    </recommendedName>
    <alternativeName>
        <fullName>Anti-silencing function protein 1</fullName>
    </alternativeName>
</protein>
<feature type="chain" id="PRO_0000284030" description="Histone chaperone ASF1">
    <location>
        <begin position="1"/>
        <end position="305"/>
    </location>
</feature>
<feature type="region of interest" description="Disordered" evidence="3">
    <location>
        <begin position="157"/>
        <end position="305"/>
    </location>
</feature>
<feature type="coiled-coil region" evidence="2">
    <location>
        <begin position="168"/>
        <end position="206"/>
    </location>
</feature>
<feature type="compositionally biased region" description="Acidic residues" evidence="3">
    <location>
        <begin position="168"/>
        <end position="213"/>
    </location>
</feature>
<feature type="compositionally biased region" description="Acidic residues" evidence="3">
    <location>
        <begin position="221"/>
        <end position="249"/>
    </location>
</feature>
<feature type="compositionally biased region" description="Basic and acidic residues" evidence="3">
    <location>
        <begin position="259"/>
        <end position="272"/>
    </location>
</feature>
<feature type="compositionally biased region" description="Basic and acidic residues" evidence="3">
    <location>
        <begin position="278"/>
        <end position="295"/>
    </location>
</feature>
<name>ASF1_CANGA</name>
<sequence length="305" mass="34610">MSIVSLLGIKVLNNPAKFTDPYEFEITFECLEPLKNDLEWKLTYVGSSRSLEHDQELDSILVGPVPVGVNKFVFTADPPSAELIPASELVSVTVILLSCSYDGREFVRVGYYVNNEYDSEELRENPPQKVQVDHIVRNILAEKPRVTRFNIVWDNENEADIYPPEQPGVDEEDEAEEEEEEEEEEEEEEEAEDEEEEVEVDVDGEVDLENEDDKTDKIIDGEEAEDDDDGEEIGDEEDEDDEDDEEGDAQTETAAPNDKTTDTEKEVRLHDRDEDEKADSSKKLKTENDTAKEPDTAPTPQDSTN</sequence>
<reference key="1">
    <citation type="journal article" date="2004" name="Nature">
        <title>Genome evolution in yeasts.</title>
        <authorList>
            <person name="Dujon B."/>
            <person name="Sherman D."/>
            <person name="Fischer G."/>
            <person name="Durrens P."/>
            <person name="Casaregola S."/>
            <person name="Lafontaine I."/>
            <person name="de Montigny J."/>
            <person name="Marck C."/>
            <person name="Neuveglise C."/>
            <person name="Talla E."/>
            <person name="Goffard N."/>
            <person name="Frangeul L."/>
            <person name="Aigle M."/>
            <person name="Anthouard V."/>
            <person name="Babour A."/>
            <person name="Barbe V."/>
            <person name="Barnay S."/>
            <person name="Blanchin S."/>
            <person name="Beckerich J.-M."/>
            <person name="Beyne E."/>
            <person name="Bleykasten C."/>
            <person name="Boisrame A."/>
            <person name="Boyer J."/>
            <person name="Cattolico L."/>
            <person name="Confanioleri F."/>
            <person name="de Daruvar A."/>
            <person name="Despons L."/>
            <person name="Fabre E."/>
            <person name="Fairhead C."/>
            <person name="Ferry-Dumazet H."/>
            <person name="Groppi A."/>
            <person name="Hantraye F."/>
            <person name="Hennequin C."/>
            <person name="Jauniaux N."/>
            <person name="Joyet P."/>
            <person name="Kachouri R."/>
            <person name="Kerrest A."/>
            <person name="Koszul R."/>
            <person name="Lemaire M."/>
            <person name="Lesur I."/>
            <person name="Ma L."/>
            <person name="Muller H."/>
            <person name="Nicaud J.-M."/>
            <person name="Nikolski M."/>
            <person name="Oztas S."/>
            <person name="Ozier-Kalogeropoulos O."/>
            <person name="Pellenz S."/>
            <person name="Potier S."/>
            <person name="Richard G.-F."/>
            <person name="Straub M.-L."/>
            <person name="Suleau A."/>
            <person name="Swennen D."/>
            <person name="Tekaia F."/>
            <person name="Wesolowski-Louvel M."/>
            <person name="Westhof E."/>
            <person name="Wirth B."/>
            <person name="Zeniou-Meyer M."/>
            <person name="Zivanovic Y."/>
            <person name="Bolotin-Fukuhara M."/>
            <person name="Thierry A."/>
            <person name="Bouchier C."/>
            <person name="Caudron B."/>
            <person name="Scarpelli C."/>
            <person name="Gaillardin C."/>
            <person name="Weissenbach J."/>
            <person name="Wincker P."/>
            <person name="Souciet J.-L."/>
        </authorList>
    </citation>
    <scope>NUCLEOTIDE SEQUENCE [LARGE SCALE GENOMIC DNA]</scope>
    <source>
        <strain>ATCC 2001 / BCRC 20586 / JCM 3761 / NBRC 0622 / NRRL Y-65 / CBS 138</strain>
    </source>
</reference>
<organism>
    <name type="scientific">Candida glabrata (strain ATCC 2001 / BCRC 20586 / JCM 3761 / NBRC 0622 / NRRL Y-65 / CBS 138)</name>
    <name type="common">Yeast</name>
    <name type="synonym">Nakaseomyces glabratus</name>
    <dbReference type="NCBI Taxonomy" id="284593"/>
    <lineage>
        <taxon>Eukaryota</taxon>
        <taxon>Fungi</taxon>
        <taxon>Dikarya</taxon>
        <taxon>Ascomycota</taxon>
        <taxon>Saccharomycotina</taxon>
        <taxon>Saccharomycetes</taxon>
        <taxon>Saccharomycetales</taxon>
        <taxon>Saccharomycetaceae</taxon>
        <taxon>Nakaseomyces</taxon>
    </lineage>
</organism>
<dbReference type="EMBL" id="CR380958">
    <property type="protein sequence ID" value="CAG61980.1"/>
    <property type="molecule type" value="Genomic_DNA"/>
</dbReference>
<dbReference type="RefSeq" id="XP_449010.1">
    <property type="nucleotide sequence ID" value="XM_449010.1"/>
</dbReference>
<dbReference type="SMR" id="Q6FL84"/>
<dbReference type="FunCoup" id="Q6FL84">
    <property type="interactions" value="938"/>
</dbReference>
<dbReference type="STRING" id="284593.Q6FL84"/>
<dbReference type="EnsemblFungi" id="CAGL0L05412g-T">
    <property type="protein sequence ID" value="CAGL0L05412g-T-p1"/>
    <property type="gene ID" value="CAGL0L05412g"/>
</dbReference>
<dbReference type="KEGG" id="cgr:2890789"/>
<dbReference type="CGD" id="CAL0135742">
    <property type="gene designation" value="CAGL0L05412g"/>
</dbReference>
<dbReference type="VEuPathDB" id="FungiDB:CAGL0L05412g"/>
<dbReference type="eggNOG" id="KOG3265">
    <property type="taxonomic scope" value="Eukaryota"/>
</dbReference>
<dbReference type="HOGENOM" id="CLU_060354_0_2_1"/>
<dbReference type="InParanoid" id="Q6FL84"/>
<dbReference type="OMA" id="CAEPVDI"/>
<dbReference type="Proteomes" id="UP000002428">
    <property type="component" value="Chromosome L"/>
</dbReference>
<dbReference type="GO" id="GO:0000781">
    <property type="term" value="C:chromosome, telomeric region"/>
    <property type="evidence" value="ECO:0007669"/>
    <property type="project" value="GOC"/>
</dbReference>
<dbReference type="GO" id="GO:0005829">
    <property type="term" value="C:cytosol"/>
    <property type="evidence" value="ECO:0007669"/>
    <property type="project" value="EnsemblFungi"/>
</dbReference>
<dbReference type="GO" id="GO:0070775">
    <property type="term" value="C:H3 histone acetyltransferase complex"/>
    <property type="evidence" value="ECO:0007669"/>
    <property type="project" value="EnsemblFungi"/>
</dbReference>
<dbReference type="GO" id="GO:0005634">
    <property type="term" value="C:nucleus"/>
    <property type="evidence" value="ECO:0007669"/>
    <property type="project" value="UniProtKB-SubCell"/>
</dbReference>
<dbReference type="GO" id="GO:0010698">
    <property type="term" value="F:acetyltransferase activator activity"/>
    <property type="evidence" value="ECO:0007669"/>
    <property type="project" value="EnsemblFungi"/>
</dbReference>
<dbReference type="GO" id="GO:0042393">
    <property type="term" value="F:histone binding"/>
    <property type="evidence" value="ECO:0007669"/>
    <property type="project" value="EnsemblFungi"/>
</dbReference>
<dbReference type="GO" id="GO:0033554">
    <property type="term" value="P:cellular response to stress"/>
    <property type="evidence" value="ECO:0007669"/>
    <property type="project" value="EnsemblFungi"/>
</dbReference>
<dbReference type="GO" id="GO:0006335">
    <property type="term" value="P:DNA replication-dependent chromatin assembly"/>
    <property type="evidence" value="ECO:0007669"/>
    <property type="project" value="EnsemblFungi"/>
</dbReference>
<dbReference type="GO" id="GO:0006334">
    <property type="term" value="P:nucleosome assembly"/>
    <property type="evidence" value="ECO:0007669"/>
    <property type="project" value="InterPro"/>
</dbReference>
<dbReference type="GO" id="GO:0006337">
    <property type="term" value="P:nucleosome disassembly"/>
    <property type="evidence" value="ECO:0007669"/>
    <property type="project" value="EnsemblFungi"/>
</dbReference>
<dbReference type="GO" id="GO:0032968">
    <property type="term" value="P:positive regulation of transcription elongation by RNA polymerase II"/>
    <property type="evidence" value="ECO:0007669"/>
    <property type="project" value="EnsemblFungi"/>
</dbReference>
<dbReference type="GO" id="GO:0036211">
    <property type="term" value="P:protein modification process"/>
    <property type="evidence" value="ECO:0007669"/>
    <property type="project" value="EnsemblFungi"/>
</dbReference>
<dbReference type="GO" id="GO:0030466">
    <property type="term" value="P:silent mating-type cassette heterochromatin formation"/>
    <property type="evidence" value="ECO:0007669"/>
    <property type="project" value="EnsemblFungi"/>
</dbReference>
<dbReference type="GO" id="GO:0031509">
    <property type="term" value="P:subtelomeric heterochromatin formation"/>
    <property type="evidence" value="ECO:0007669"/>
    <property type="project" value="EnsemblFungi"/>
</dbReference>
<dbReference type="FunFam" id="2.60.40.1490:FF:000001">
    <property type="entry name" value="Histone chaperone ASF1"/>
    <property type="match status" value="1"/>
</dbReference>
<dbReference type="Gene3D" id="2.60.40.1490">
    <property type="entry name" value="Histone chaperone ASF1-like"/>
    <property type="match status" value="1"/>
</dbReference>
<dbReference type="InterPro" id="IPR006818">
    <property type="entry name" value="ASF1-like"/>
</dbReference>
<dbReference type="InterPro" id="IPR036747">
    <property type="entry name" value="ASF1-like_sf"/>
</dbReference>
<dbReference type="InterPro" id="IPR017282">
    <property type="entry name" value="Hist_deposition_Asf1"/>
</dbReference>
<dbReference type="PANTHER" id="PTHR12040">
    <property type="entry name" value="ANTI-SILENCING PROTEIN 1"/>
    <property type="match status" value="1"/>
</dbReference>
<dbReference type="PANTHER" id="PTHR12040:SF0">
    <property type="entry name" value="HISTONE CHAPERONE ASF1"/>
    <property type="match status" value="1"/>
</dbReference>
<dbReference type="Pfam" id="PF04729">
    <property type="entry name" value="ASF1_hist_chap"/>
    <property type="match status" value="1"/>
</dbReference>
<dbReference type="PIRSF" id="PIRSF037759">
    <property type="entry name" value="Histone_Asf1"/>
    <property type="match status" value="1"/>
</dbReference>
<dbReference type="SUPFAM" id="SSF101546">
    <property type="entry name" value="ASF1-like"/>
    <property type="match status" value="1"/>
</dbReference>
<accession>Q6FL84</accession>
<proteinExistence type="inferred from homology"/>
<gene>
    <name type="primary">ASF1</name>
    <name type="ordered locus">CAGL0L05412g</name>
</gene>